<gene>
    <name evidence="1" type="primary">rpoB</name>
    <name type="ordered locus">RPC_3458</name>
</gene>
<protein>
    <recommendedName>
        <fullName evidence="1">DNA-directed RNA polymerase subunit beta</fullName>
        <shortName evidence="1">RNAP subunit beta</shortName>
        <ecNumber evidence="1">2.7.7.6</ecNumber>
    </recommendedName>
    <alternativeName>
        <fullName evidence="1">RNA polymerase subunit beta</fullName>
    </alternativeName>
    <alternativeName>
        <fullName evidence="1">Transcriptase subunit beta</fullName>
    </alternativeName>
</protein>
<evidence type="ECO:0000255" key="1">
    <source>
        <dbReference type="HAMAP-Rule" id="MF_01321"/>
    </source>
</evidence>
<keyword id="KW-0240">DNA-directed RNA polymerase</keyword>
<keyword id="KW-0548">Nucleotidyltransferase</keyword>
<keyword id="KW-0804">Transcription</keyword>
<keyword id="KW-0808">Transferase</keyword>
<organism>
    <name type="scientific">Rhodopseudomonas palustris (strain BisB18)</name>
    <dbReference type="NCBI Taxonomy" id="316056"/>
    <lineage>
        <taxon>Bacteria</taxon>
        <taxon>Pseudomonadati</taxon>
        <taxon>Pseudomonadota</taxon>
        <taxon>Alphaproteobacteria</taxon>
        <taxon>Hyphomicrobiales</taxon>
        <taxon>Nitrobacteraceae</taxon>
        <taxon>Rhodopseudomonas</taxon>
    </lineage>
</organism>
<name>RPOB_RHOPB</name>
<feature type="chain" id="PRO_0000300388" description="DNA-directed RNA polymerase subunit beta">
    <location>
        <begin position="1"/>
        <end position="1373"/>
    </location>
</feature>
<sequence>MAQQTFTGRKRVRKFFGHIREVAEMPNLIEVQKASYDQFLMVDEPVGGRLDEGLQAVFRSVFPISDFSNTSMLEFVRYEFEPPKYDVDECRQRGMTYAAPLKVTLRLIVFDIDEETGARSVKDIKEQDVYMGDIPLMTMNGTFVVNGTERVIVSQMHRSPGVFFDHDKGKTHSSGKLLFAARVIPYRGSWLDIEFDAKDIVFARIDRRRKIPVTSLMFALGLDGEEILSTFYKKIQYKKIKEGWRVPFDSNRFRGYSTINDLIDADTGKVVLEAGKKLTVRAARQLQEKGLKALRLSDEELVGNYLAEDLVNPKTGEIYAEAGEEITEKSLKGLNEQGYKELPLLDIDHVNIGAYIRNTLAADKNMTREDALFDIYRVMRPGEPPTIDSAQNMFQSLFFDSERYDLSAVGRVKMNMRLELDAPDTHRTLRKEDILAVIKTLVGLRDGRGEIDDIDHLGNRRVRSVGELMENQYRIGLLRMERAIKERMSSVDIDTVMPQDLINAKPAAAAVREFFGSSQLSQFMDQTNPLSEITHKRRLSALGPGGLTRERAGFEVRDVHPTHYGRICPIETPEGPNIGLINSLATFARVNKYGFVETPYRRCKDGRVTDEVVYLSAMEEGRYSVAQANVQLDPKGRFVEDLIVCRDGGTRDVVLIPADKVDFMDVSPKQLVSVAAALIPFLENDDANRALMGSNMQRQAVPLVRAEAPFVGTGMEGVVARDSGAAIAARRTGVIDQIDATRIVIRATDDLDPTKSGVDIYRLMKYQRSNQSTCINQRPLVKVGDMVAKGDIIADGPSTDLGELALGRNVLVAFMPWNGYNFEDSILLSERIVKDDVFTSIHIEEFEVMARDTKLGPEEITRDIPNVSEEALKNLDEAGIVYIGAEVRAGDILVGKITPKGESPMTPEEKLLRAIFGEKASDVRDTSLRVPPGVQGTIVEVRVFNRHGVDKDERALAIEREEIERLAKDRDDEQAILDRNVYGRLADLLENRQGIAGPKGFKKDTKITRAVIEEYPKSQWWLFASPNDKLMAEIEAMRKQYDESKKGLEQRFLDKVEKLQRGDELPPGVMKMVKVFVAVKRKIQPGDKMAGRHGNKGVVSKIVPIEDMPFLEDGTHADIVLNPLGVPSRMNVGQILETHLGWACAGLGKRIGQTIDAYYQKQDLKPMRETLRKIYGEDETIKSLNDAELLELARNLKPGVPIATPVFDGAKEADIEEMLKLAGLDASGQSTVYDGRTGDTFDRKVTVGYIYMLKLHHLVDDKIHARSIGPYSLVTQQPLGGKAQFGGQRFGEMEVWALEAYGAAYTLQEMLTVKSDDVAGRTKVYEAIVRGDDTFEAGIPESFNVLVKEMRSLGLNVDLHNSKLATPTSEAAE</sequence>
<dbReference type="EC" id="2.7.7.6" evidence="1"/>
<dbReference type="EMBL" id="CP000301">
    <property type="protein sequence ID" value="ABD88998.1"/>
    <property type="molecule type" value="Genomic_DNA"/>
</dbReference>
<dbReference type="SMR" id="Q211D8"/>
<dbReference type="STRING" id="316056.RPC_3458"/>
<dbReference type="KEGG" id="rpc:RPC_3458"/>
<dbReference type="eggNOG" id="COG0085">
    <property type="taxonomic scope" value="Bacteria"/>
</dbReference>
<dbReference type="HOGENOM" id="CLU_000524_4_0_5"/>
<dbReference type="OrthoDB" id="9803954at2"/>
<dbReference type="GO" id="GO:0000428">
    <property type="term" value="C:DNA-directed RNA polymerase complex"/>
    <property type="evidence" value="ECO:0007669"/>
    <property type="project" value="UniProtKB-KW"/>
</dbReference>
<dbReference type="GO" id="GO:0003677">
    <property type="term" value="F:DNA binding"/>
    <property type="evidence" value="ECO:0007669"/>
    <property type="project" value="UniProtKB-UniRule"/>
</dbReference>
<dbReference type="GO" id="GO:0003899">
    <property type="term" value="F:DNA-directed RNA polymerase activity"/>
    <property type="evidence" value="ECO:0007669"/>
    <property type="project" value="UniProtKB-UniRule"/>
</dbReference>
<dbReference type="GO" id="GO:0032549">
    <property type="term" value="F:ribonucleoside binding"/>
    <property type="evidence" value="ECO:0007669"/>
    <property type="project" value="InterPro"/>
</dbReference>
<dbReference type="GO" id="GO:0006351">
    <property type="term" value="P:DNA-templated transcription"/>
    <property type="evidence" value="ECO:0007669"/>
    <property type="project" value="UniProtKB-UniRule"/>
</dbReference>
<dbReference type="CDD" id="cd00653">
    <property type="entry name" value="RNA_pol_B_RPB2"/>
    <property type="match status" value="1"/>
</dbReference>
<dbReference type="FunFam" id="2.40.50.100:FF:000006">
    <property type="entry name" value="DNA-directed RNA polymerase subunit beta"/>
    <property type="match status" value="1"/>
</dbReference>
<dbReference type="FunFam" id="3.90.1800.10:FF:000001">
    <property type="entry name" value="DNA-directed RNA polymerase subunit beta"/>
    <property type="match status" value="1"/>
</dbReference>
<dbReference type="Gene3D" id="2.40.50.100">
    <property type="match status" value="1"/>
</dbReference>
<dbReference type="Gene3D" id="2.40.50.150">
    <property type="match status" value="1"/>
</dbReference>
<dbReference type="Gene3D" id="3.90.1100.10">
    <property type="match status" value="2"/>
</dbReference>
<dbReference type="Gene3D" id="2.30.150.10">
    <property type="entry name" value="DNA-directed RNA polymerase, beta subunit, external 1 domain"/>
    <property type="match status" value="1"/>
</dbReference>
<dbReference type="Gene3D" id="2.40.270.10">
    <property type="entry name" value="DNA-directed RNA polymerase, subunit 2, domain 6"/>
    <property type="match status" value="2"/>
</dbReference>
<dbReference type="Gene3D" id="3.90.1800.10">
    <property type="entry name" value="RNA polymerase alpha subunit dimerisation domain"/>
    <property type="match status" value="1"/>
</dbReference>
<dbReference type="Gene3D" id="3.90.1110.10">
    <property type="entry name" value="RNA polymerase Rpb2, domain 2"/>
    <property type="match status" value="2"/>
</dbReference>
<dbReference type="HAMAP" id="MF_01321">
    <property type="entry name" value="RNApol_bact_RpoB"/>
    <property type="match status" value="1"/>
</dbReference>
<dbReference type="InterPro" id="IPR042107">
    <property type="entry name" value="DNA-dir_RNA_pol_bsu_ext_1_sf"/>
</dbReference>
<dbReference type="InterPro" id="IPR019462">
    <property type="entry name" value="DNA-dir_RNA_pol_bsu_external_1"/>
</dbReference>
<dbReference type="InterPro" id="IPR015712">
    <property type="entry name" value="DNA-dir_RNA_pol_su2"/>
</dbReference>
<dbReference type="InterPro" id="IPR007120">
    <property type="entry name" value="DNA-dir_RNAP_su2_dom"/>
</dbReference>
<dbReference type="InterPro" id="IPR037033">
    <property type="entry name" value="DNA-dir_RNAP_su2_hyb_sf"/>
</dbReference>
<dbReference type="InterPro" id="IPR010243">
    <property type="entry name" value="RNA_pol_bsu_bac"/>
</dbReference>
<dbReference type="InterPro" id="IPR007121">
    <property type="entry name" value="RNA_pol_bsu_CS"/>
</dbReference>
<dbReference type="InterPro" id="IPR007644">
    <property type="entry name" value="RNA_pol_bsu_protrusion"/>
</dbReference>
<dbReference type="InterPro" id="IPR007642">
    <property type="entry name" value="RNA_pol_Rpb2_2"/>
</dbReference>
<dbReference type="InterPro" id="IPR037034">
    <property type="entry name" value="RNA_pol_Rpb2_2_sf"/>
</dbReference>
<dbReference type="InterPro" id="IPR007645">
    <property type="entry name" value="RNA_pol_Rpb2_3"/>
</dbReference>
<dbReference type="InterPro" id="IPR007641">
    <property type="entry name" value="RNA_pol_Rpb2_7"/>
</dbReference>
<dbReference type="InterPro" id="IPR014724">
    <property type="entry name" value="RNA_pol_RPB2_OB-fold"/>
</dbReference>
<dbReference type="NCBIfam" id="NF001616">
    <property type="entry name" value="PRK00405.1"/>
    <property type="match status" value="1"/>
</dbReference>
<dbReference type="NCBIfam" id="TIGR02013">
    <property type="entry name" value="rpoB"/>
    <property type="match status" value="1"/>
</dbReference>
<dbReference type="PANTHER" id="PTHR20856">
    <property type="entry name" value="DNA-DIRECTED RNA POLYMERASE I SUBUNIT 2"/>
    <property type="match status" value="1"/>
</dbReference>
<dbReference type="Pfam" id="PF04563">
    <property type="entry name" value="RNA_pol_Rpb2_1"/>
    <property type="match status" value="1"/>
</dbReference>
<dbReference type="Pfam" id="PF04561">
    <property type="entry name" value="RNA_pol_Rpb2_2"/>
    <property type="match status" value="2"/>
</dbReference>
<dbReference type="Pfam" id="PF04565">
    <property type="entry name" value="RNA_pol_Rpb2_3"/>
    <property type="match status" value="1"/>
</dbReference>
<dbReference type="Pfam" id="PF10385">
    <property type="entry name" value="RNA_pol_Rpb2_45"/>
    <property type="match status" value="1"/>
</dbReference>
<dbReference type="Pfam" id="PF00562">
    <property type="entry name" value="RNA_pol_Rpb2_6"/>
    <property type="match status" value="1"/>
</dbReference>
<dbReference type="Pfam" id="PF04560">
    <property type="entry name" value="RNA_pol_Rpb2_7"/>
    <property type="match status" value="1"/>
</dbReference>
<dbReference type="SUPFAM" id="SSF64484">
    <property type="entry name" value="beta and beta-prime subunits of DNA dependent RNA-polymerase"/>
    <property type="match status" value="1"/>
</dbReference>
<dbReference type="PROSITE" id="PS01166">
    <property type="entry name" value="RNA_POL_BETA"/>
    <property type="match status" value="1"/>
</dbReference>
<reference key="1">
    <citation type="submission" date="2006-03" db="EMBL/GenBank/DDBJ databases">
        <title>Complete sequence of Rhodopseudomonas palustris BisB18.</title>
        <authorList>
            <consortium name="US DOE Joint Genome Institute"/>
            <person name="Copeland A."/>
            <person name="Lucas S."/>
            <person name="Lapidus A."/>
            <person name="Barry K."/>
            <person name="Detter J.C."/>
            <person name="Glavina del Rio T."/>
            <person name="Hammon N."/>
            <person name="Israni S."/>
            <person name="Dalin E."/>
            <person name="Tice H."/>
            <person name="Pitluck S."/>
            <person name="Chain P."/>
            <person name="Malfatti S."/>
            <person name="Shin M."/>
            <person name="Vergez L."/>
            <person name="Schmutz J."/>
            <person name="Larimer F."/>
            <person name="Land M."/>
            <person name="Hauser L."/>
            <person name="Pelletier D.A."/>
            <person name="Kyrpides N."/>
            <person name="Anderson I."/>
            <person name="Oda Y."/>
            <person name="Harwood C.S."/>
            <person name="Richardson P."/>
        </authorList>
    </citation>
    <scope>NUCLEOTIDE SEQUENCE [LARGE SCALE GENOMIC DNA]</scope>
    <source>
        <strain>BisB18</strain>
    </source>
</reference>
<accession>Q211D8</accession>
<comment type="function">
    <text evidence="1">DNA-dependent RNA polymerase catalyzes the transcription of DNA into RNA using the four ribonucleoside triphosphates as substrates.</text>
</comment>
<comment type="catalytic activity">
    <reaction evidence="1">
        <text>RNA(n) + a ribonucleoside 5'-triphosphate = RNA(n+1) + diphosphate</text>
        <dbReference type="Rhea" id="RHEA:21248"/>
        <dbReference type="Rhea" id="RHEA-COMP:14527"/>
        <dbReference type="Rhea" id="RHEA-COMP:17342"/>
        <dbReference type="ChEBI" id="CHEBI:33019"/>
        <dbReference type="ChEBI" id="CHEBI:61557"/>
        <dbReference type="ChEBI" id="CHEBI:140395"/>
        <dbReference type="EC" id="2.7.7.6"/>
    </reaction>
</comment>
<comment type="subunit">
    <text evidence="1">The RNAP catalytic core consists of 2 alpha, 1 beta, 1 beta' and 1 omega subunit. When a sigma factor is associated with the core the holoenzyme is formed, which can initiate transcription.</text>
</comment>
<comment type="similarity">
    <text evidence="1">Belongs to the RNA polymerase beta chain family.</text>
</comment>
<proteinExistence type="inferred from homology"/>